<feature type="chain" id="PRO_1000004619" description="Glutamyl-tRNA reductase">
    <location>
        <begin position="1"/>
        <end position="418"/>
    </location>
</feature>
<feature type="active site" description="Nucleophile" evidence="1">
    <location>
        <position position="50"/>
    </location>
</feature>
<feature type="binding site" evidence="1">
    <location>
        <begin position="49"/>
        <end position="52"/>
    </location>
    <ligand>
        <name>substrate</name>
    </ligand>
</feature>
<feature type="binding site" evidence="1">
    <location>
        <position position="109"/>
    </location>
    <ligand>
        <name>substrate</name>
    </ligand>
</feature>
<feature type="binding site" evidence="1">
    <location>
        <begin position="114"/>
        <end position="116"/>
    </location>
    <ligand>
        <name>substrate</name>
    </ligand>
</feature>
<feature type="binding site" evidence="1">
    <location>
        <position position="120"/>
    </location>
    <ligand>
        <name>substrate</name>
    </ligand>
</feature>
<feature type="binding site" evidence="1">
    <location>
        <begin position="189"/>
        <end position="194"/>
    </location>
    <ligand>
        <name>NADP(+)</name>
        <dbReference type="ChEBI" id="CHEBI:58349"/>
    </ligand>
</feature>
<feature type="site" description="Important for activity" evidence="1">
    <location>
        <position position="99"/>
    </location>
</feature>
<gene>
    <name evidence="1" type="primary">hemA</name>
    <name type="ordered locus">Ecok1_11330</name>
    <name type="ORF">APECO1_327</name>
</gene>
<evidence type="ECO:0000255" key="1">
    <source>
        <dbReference type="HAMAP-Rule" id="MF_00087"/>
    </source>
</evidence>
<name>HEM1_ECOK1</name>
<sequence length="418" mass="46324">MTLLALGINHKTAPVSLRERVSFSPDKLDQALDSLLAQPMVQGGVVLSTCNRTELYLSVEERDDLQEALIRWLCDYHNLNEDDLRNSLYWHQDNDAVSHLMRVASGLDSLVLGEPQILGQVKKAFADSQKGHMKASELERMFQKSFSVAKRVRTETDIGASAVSVAFAACTLARQIFESLSTVTVLLVGAGETIELVTRHLREHKVQKMIIANRTRERAQILADEVGAEVIALSDIDERLREADIIISSTASPLPIIGKGMVERALKSRRNQPMLLVDIAVPRDVEPEVGKLANAYLYSVDDLQSIISHNLAQRKAAAVEAETIVAQEASEFMAWLRAQSASETIRDYRSQAEQVRDELTAKALAALEQGGDAQTIMQDLAWKLTNRLIHAPTKSLQQAARDGDNERLNILRDSLGLE</sequence>
<dbReference type="EC" id="1.2.1.70" evidence="1"/>
<dbReference type="EMBL" id="CP000468">
    <property type="protein sequence ID" value="ABJ00627.1"/>
    <property type="molecule type" value="Genomic_DNA"/>
</dbReference>
<dbReference type="RefSeq" id="WP_001350855.1">
    <property type="nucleotide sequence ID" value="NZ_CADILS010000001.1"/>
</dbReference>
<dbReference type="SMR" id="A1AAD7"/>
<dbReference type="KEGG" id="ecv:APECO1_327"/>
<dbReference type="HOGENOM" id="CLU_035113_2_2_6"/>
<dbReference type="UniPathway" id="UPA00251">
    <property type="reaction ID" value="UER00316"/>
</dbReference>
<dbReference type="Proteomes" id="UP000008216">
    <property type="component" value="Chromosome"/>
</dbReference>
<dbReference type="GO" id="GO:0008883">
    <property type="term" value="F:glutamyl-tRNA reductase activity"/>
    <property type="evidence" value="ECO:0007669"/>
    <property type="project" value="UniProtKB-UniRule"/>
</dbReference>
<dbReference type="GO" id="GO:0050661">
    <property type="term" value="F:NADP binding"/>
    <property type="evidence" value="ECO:0007669"/>
    <property type="project" value="InterPro"/>
</dbReference>
<dbReference type="GO" id="GO:0019353">
    <property type="term" value="P:protoporphyrinogen IX biosynthetic process from glutamate"/>
    <property type="evidence" value="ECO:0007669"/>
    <property type="project" value="TreeGrafter"/>
</dbReference>
<dbReference type="CDD" id="cd05213">
    <property type="entry name" value="NAD_bind_Glutamyl_tRNA_reduct"/>
    <property type="match status" value="1"/>
</dbReference>
<dbReference type="FunFam" id="3.30.460.30:FF:000001">
    <property type="entry name" value="Glutamyl-tRNA reductase"/>
    <property type="match status" value="1"/>
</dbReference>
<dbReference type="FunFam" id="3.40.50.720:FF:000031">
    <property type="entry name" value="Glutamyl-tRNA reductase"/>
    <property type="match status" value="1"/>
</dbReference>
<dbReference type="Gene3D" id="3.30.460.30">
    <property type="entry name" value="Glutamyl-tRNA reductase, N-terminal domain"/>
    <property type="match status" value="1"/>
</dbReference>
<dbReference type="Gene3D" id="3.40.50.720">
    <property type="entry name" value="NAD(P)-binding Rossmann-like Domain"/>
    <property type="match status" value="1"/>
</dbReference>
<dbReference type="HAMAP" id="MF_00087">
    <property type="entry name" value="Glu_tRNA_reductase"/>
    <property type="match status" value="1"/>
</dbReference>
<dbReference type="InterPro" id="IPR000343">
    <property type="entry name" value="4pyrrol_synth_GluRdtase"/>
</dbReference>
<dbReference type="InterPro" id="IPR015896">
    <property type="entry name" value="4pyrrol_synth_GluRdtase_dimer"/>
</dbReference>
<dbReference type="InterPro" id="IPR015895">
    <property type="entry name" value="4pyrrol_synth_GluRdtase_N"/>
</dbReference>
<dbReference type="InterPro" id="IPR018214">
    <property type="entry name" value="GluRdtase_CS"/>
</dbReference>
<dbReference type="InterPro" id="IPR036453">
    <property type="entry name" value="GluRdtase_dimer_dom_sf"/>
</dbReference>
<dbReference type="InterPro" id="IPR036343">
    <property type="entry name" value="GluRdtase_N_sf"/>
</dbReference>
<dbReference type="InterPro" id="IPR036291">
    <property type="entry name" value="NAD(P)-bd_dom_sf"/>
</dbReference>
<dbReference type="InterPro" id="IPR006151">
    <property type="entry name" value="Shikm_DH/Glu-tRNA_Rdtase"/>
</dbReference>
<dbReference type="NCBIfam" id="TIGR01035">
    <property type="entry name" value="hemA"/>
    <property type="match status" value="1"/>
</dbReference>
<dbReference type="PANTHER" id="PTHR43013">
    <property type="entry name" value="GLUTAMYL-TRNA REDUCTASE"/>
    <property type="match status" value="1"/>
</dbReference>
<dbReference type="PANTHER" id="PTHR43013:SF1">
    <property type="entry name" value="GLUTAMYL-TRNA REDUCTASE"/>
    <property type="match status" value="1"/>
</dbReference>
<dbReference type="Pfam" id="PF00745">
    <property type="entry name" value="GlutR_dimer"/>
    <property type="match status" value="1"/>
</dbReference>
<dbReference type="Pfam" id="PF05201">
    <property type="entry name" value="GlutR_N"/>
    <property type="match status" value="1"/>
</dbReference>
<dbReference type="Pfam" id="PF01488">
    <property type="entry name" value="Shikimate_DH"/>
    <property type="match status" value="1"/>
</dbReference>
<dbReference type="PIRSF" id="PIRSF000445">
    <property type="entry name" value="4pyrrol_synth_GluRdtase"/>
    <property type="match status" value="1"/>
</dbReference>
<dbReference type="SUPFAM" id="SSF69742">
    <property type="entry name" value="Glutamyl tRNA-reductase catalytic, N-terminal domain"/>
    <property type="match status" value="1"/>
</dbReference>
<dbReference type="SUPFAM" id="SSF69075">
    <property type="entry name" value="Glutamyl tRNA-reductase dimerization domain"/>
    <property type="match status" value="1"/>
</dbReference>
<dbReference type="SUPFAM" id="SSF51735">
    <property type="entry name" value="NAD(P)-binding Rossmann-fold domains"/>
    <property type="match status" value="1"/>
</dbReference>
<dbReference type="PROSITE" id="PS00747">
    <property type="entry name" value="GLUTR"/>
    <property type="match status" value="1"/>
</dbReference>
<proteinExistence type="inferred from homology"/>
<comment type="function">
    <text evidence="1">Catalyzes the NADPH-dependent reduction of glutamyl-tRNA(Glu) to glutamate 1-semialdehyde (GSA).</text>
</comment>
<comment type="catalytic activity">
    <reaction evidence="1">
        <text>(S)-4-amino-5-oxopentanoate + tRNA(Glu) + NADP(+) = L-glutamyl-tRNA(Glu) + NADPH + H(+)</text>
        <dbReference type="Rhea" id="RHEA:12344"/>
        <dbReference type="Rhea" id="RHEA-COMP:9663"/>
        <dbReference type="Rhea" id="RHEA-COMP:9680"/>
        <dbReference type="ChEBI" id="CHEBI:15378"/>
        <dbReference type="ChEBI" id="CHEBI:57501"/>
        <dbReference type="ChEBI" id="CHEBI:57783"/>
        <dbReference type="ChEBI" id="CHEBI:58349"/>
        <dbReference type="ChEBI" id="CHEBI:78442"/>
        <dbReference type="ChEBI" id="CHEBI:78520"/>
        <dbReference type="EC" id="1.2.1.70"/>
    </reaction>
</comment>
<comment type="pathway">
    <text evidence="1">Porphyrin-containing compound metabolism; protoporphyrin-IX biosynthesis; 5-aminolevulinate from L-glutamyl-tRNA(Glu): step 1/2.</text>
</comment>
<comment type="subunit">
    <text evidence="1">Homodimer.</text>
</comment>
<comment type="domain">
    <text evidence="1">Possesses an unusual extended V-shaped dimeric structure with each monomer consisting of three distinct domains arranged along a curved 'spinal' alpha-helix. The N-terminal catalytic domain specifically recognizes the glutamate moiety of the substrate. The second domain is the NADPH-binding domain, and the third C-terminal domain is responsible for dimerization.</text>
</comment>
<comment type="miscellaneous">
    <text evidence="1">During catalysis, the active site Cys acts as a nucleophile attacking the alpha-carbonyl group of tRNA-bound glutamate with the formation of a thioester intermediate between enzyme and glutamate, and the concomitant release of tRNA(Glu). The thioester intermediate is finally reduced by direct hydride transfer from NADPH, to form the product GSA.</text>
</comment>
<comment type="similarity">
    <text evidence="1">Belongs to the glutamyl-tRNA reductase family.</text>
</comment>
<protein>
    <recommendedName>
        <fullName evidence="1">Glutamyl-tRNA reductase</fullName>
        <shortName evidence="1">GluTR</shortName>
        <ecNumber evidence="1">1.2.1.70</ecNumber>
    </recommendedName>
</protein>
<reference key="1">
    <citation type="journal article" date="2007" name="J. Bacteriol.">
        <title>The genome sequence of avian pathogenic Escherichia coli strain O1:K1:H7 shares strong similarities with human extraintestinal pathogenic E. coli genomes.</title>
        <authorList>
            <person name="Johnson T.J."/>
            <person name="Kariyawasam S."/>
            <person name="Wannemuehler Y."/>
            <person name="Mangiamele P."/>
            <person name="Johnson S.J."/>
            <person name="Doetkott C."/>
            <person name="Skyberg J.A."/>
            <person name="Lynne A.M."/>
            <person name="Johnson J.R."/>
            <person name="Nolan L.K."/>
        </authorList>
    </citation>
    <scope>NUCLEOTIDE SEQUENCE [LARGE SCALE GENOMIC DNA]</scope>
</reference>
<keyword id="KW-0521">NADP</keyword>
<keyword id="KW-0560">Oxidoreductase</keyword>
<keyword id="KW-0627">Porphyrin biosynthesis</keyword>
<keyword id="KW-1185">Reference proteome</keyword>
<accession>A1AAD7</accession>
<organism>
    <name type="scientific">Escherichia coli O1:K1 / APEC</name>
    <dbReference type="NCBI Taxonomy" id="405955"/>
    <lineage>
        <taxon>Bacteria</taxon>
        <taxon>Pseudomonadati</taxon>
        <taxon>Pseudomonadota</taxon>
        <taxon>Gammaproteobacteria</taxon>
        <taxon>Enterobacterales</taxon>
        <taxon>Enterobacteriaceae</taxon>
        <taxon>Escherichia</taxon>
    </lineage>
</organism>